<proteinExistence type="evidence at transcript level"/>
<sequence>MSTTRCQVVGFLLSILGLAGCIVATEMDMWSTQDLYDNPVTAVFQYEGLWRSCVQQSSGFTECRPYLTILGLPAMLQAVRALMIVGIVLSVIGLLVAIFALKCIRMGNMDDSAKAKMTLTSGIMFIIAGLCAIAGVSVFANMLVTNFWMSTASMFTSMGGMVQTVQTRYTFGAALFVGWVAGGLTLIGGVLMCIACRGLAPEETNYKAVSYHASGHNVAYRPGGFKASSGFESNTRNKKIYDGGARTEDEGQSPPSKYDYV</sequence>
<accession>Q0VCN0</accession>
<evidence type="ECO:0000250" key="1">
    <source>
        <dbReference type="UniProtKB" id="P56856"/>
    </source>
</evidence>
<evidence type="ECO:0000250" key="2">
    <source>
        <dbReference type="UniProtKB" id="P56857"/>
    </source>
</evidence>
<evidence type="ECO:0000255" key="3"/>
<evidence type="ECO:0000256" key="4">
    <source>
        <dbReference type="SAM" id="MobiDB-lite"/>
    </source>
</evidence>
<evidence type="ECO:0000305" key="5"/>
<feature type="chain" id="PRO_0000273422" description="Claudin-18">
    <location>
        <begin position="1"/>
        <end position="261"/>
    </location>
</feature>
<feature type="topological domain" description="Cytoplasmic" evidence="3">
    <location>
        <begin position="1"/>
        <end position="6"/>
    </location>
</feature>
<feature type="transmembrane region" description="Helical" evidence="3">
    <location>
        <begin position="7"/>
        <end position="27"/>
    </location>
</feature>
<feature type="topological domain" description="Extracellular" evidence="3">
    <location>
        <begin position="28"/>
        <end position="80"/>
    </location>
</feature>
<feature type="transmembrane region" description="Helical" evidence="3">
    <location>
        <begin position="81"/>
        <end position="101"/>
    </location>
</feature>
<feature type="topological domain" description="Cytoplasmic" evidence="3">
    <location>
        <begin position="102"/>
        <end position="122"/>
    </location>
</feature>
<feature type="transmembrane region" description="Helical" evidence="3">
    <location>
        <begin position="123"/>
        <end position="143"/>
    </location>
</feature>
<feature type="topological domain" description="Extracellular" evidence="3">
    <location>
        <begin position="144"/>
        <end position="174"/>
    </location>
</feature>
<feature type="transmembrane region" description="Helical" evidence="3">
    <location>
        <begin position="175"/>
        <end position="195"/>
    </location>
</feature>
<feature type="topological domain" description="Cytoplasmic" evidence="3">
    <location>
        <begin position="196"/>
        <end position="261"/>
    </location>
</feature>
<feature type="region of interest" description="Required for role in regulation of RANKL-induced osteoclast differentiation" evidence="2">
    <location>
        <begin position="195"/>
        <end position="261"/>
    </location>
</feature>
<feature type="region of interest" description="Disordered" evidence="4">
    <location>
        <begin position="228"/>
        <end position="261"/>
    </location>
</feature>
<feature type="compositionally biased region" description="Basic and acidic residues" evidence="4">
    <location>
        <begin position="239"/>
        <end position="249"/>
    </location>
</feature>
<feature type="modified residue" description="Phosphoserine" evidence="2">
    <location>
        <position position="214"/>
    </location>
</feature>
<name>CLD18_BOVIN</name>
<dbReference type="EMBL" id="BC120090">
    <property type="protein sequence ID" value="AAI20091.1"/>
    <property type="molecule type" value="mRNA"/>
</dbReference>
<dbReference type="RefSeq" id="NP_001068984.1">
    <property type="nucleotide sequence ID" value="NM_001075516.1"/>
</dbReference>
<dbReference type="SMR" id="Q0VCN0"/>
<dbReference type="FunCoup" id="Q0VCN0">
    <property type="interactions" value="190"/>
</dbReference>
<dbReference type="STRING" id="9913.ENSBTAP00000019421"/>
<dbReference type="PaxDb" id="9913-ENSBTAP00000019421"/>
<dbReference type="Ensembl" id="ENSBTAT00000019421.3">
    <property type="protein sequence ID" value="ENSBTAP00000019421.2"/>
    <property type="gene ID" value="ENSBTAG00000014589.6"/>
</dbReference>
<dbReference type="GeneID" id="511460"/>
<dbReference type="KEGG" id="bta:511460"/>
<dbReference type="CTD" id="51208"/>
<dbReference type="VEuPathDB" id="HostDB:ENSBTAG00000014589"/>
<dbReference type="VGNC" id="VGNC:27408">
    <property type="gene designation" value="CLDN18"/>
</dbReference>
<dbReference type="eggNOG" id="ENOG502QTRB">
    <property type="taxonomic scope" value="Eukaryota"/>
</dbReference>
<dbReference type="GeneTree" id="ENSGT00940000158655"/>
<dbReference type="HOGENOM" id="CLU_076370_2_1_1"/>
<dbReference type="InParanoid" id="Q0VCN0"/>
<dbReference type="OMA" id="TICQVMG"/>
<dbReference type="OrthoDB" id="8795554at2759"/>
<dbReference type="TreeFam" id="TF331936"/>
<dbReference type="Proteomes" id="UP000009136">
    <property type="component" value="Chromosome 1"/>
</dbReference>
<dbReference type="Bgee" id="ENSBTAG00000014589">
    <property type="expression patterns" value="Expressed in abomasum and 13 other cell types or tissues"/>
</dbReference>
<dbReference type="GO" id="GO:0005923">
    <property type="term" value="C:bicellular tight junction"/>
    <property type="evidence" value="ECO:0000318"/>
    <property type="project" value="GO_Central"/>
</dbReference>
<dbReference type="GO" id="GO:0005911">
    <property type="term" value="C:cell-cell junction"/>
    <property type="evidence" value="ECO:0000250"/>
    <property type="project" value="UniProtKB"/>
</dbReference>
<dbReference type="GO" id="GO:0005886">
    <property type="term" value="C:plasma membrane"/>
    <property type="evidence" value="ECO:0000250"/>
    <property type="project" value="UniProtKB"/>
</dbReference>
<dbReference type="GO" id="GO:0005198">
    <property type="term" value="F:structural molecule activity"/>
    <property type="evidence" value="ECO:0007669"/>
    <property type="project" value="InterPro"/>
</dbReference>
<dbReference type="GO" id="GO:0070830">
    <property type="term" value="P:bicellular tight junction assembly"/>
    <property type="evidence" value="ECO:0000318"/>
    <property type="project" value="GO_Central"/>
</dbReference>
<dbReference type="GO" id="GO:0007155">
    <property type="term" value="P:cell adhesion"/>
    <property type="evidence" value="ECO:0000318"/>
    <property type="project" value="GO_Central"/>
</dbReference>
<dbReference type="GO" id="GO:0071391">
    <property type="term" value="P:cellular response to estrogen stimulus"/>
    <property type="evidence" value="ECO:0000250"/>
    <property type="project" value="UniProtKB"/>
</dbReference>
<dbReference type="GO" id="GO:0048565">
    <property type="term" value="P:digestive tract development"/>
    <property type="evidence" value="ECO:0007669"/>
    <property type="project" value="Ensembl"/>
</dbReference>
<dbReference type="GO" id="GO:0050673">
    <property type="term" value="P:epithelial cell proliferation"/>
    <property type="evidence" value="ECO:0000250"/>
    <property type="project" value="UniProtKB"/>
</dbReference>
<dbReference type="GO" id="GO:0042045">
    <property type="term" value="P:epithelial fluid transport"/>
    <property type="evidence" value="ECO:0000250"/>
    <property type="project" value="UniProtKB"/>
</dbReference>
<dbReference type="GO" id="GO:0048286">
    <property type="term" value="P:lung alveolus development"/>
    <property type="evidence" value="ECO:0000250"/>
    <property type="project" value="UniProtKB"/>
</dbReference>
<dbReference type="GO" id="GO:0045779">
    <property type="term" value="P:negative regulation of bone resorption"/>
    <property type="evidence" value="ECO:0007669"/>
    <property type="project" value="Ensembl"/>
</dbReference>
<dbReference type="GO" id="GO:2001205">
    <property type="term" value="P:negative regulation of osteoclast development"/>
    <property type="evidence" value="ECO:0007669"/>
    <property type="project" value="Ensembl"/>
</dbReference>
<dbReference type="GO" id="GO:1900181">
    <property type="term" value="P:negative regulation of protein localization to nucleus"/>
    <property type="evidence" value="ECO:0000250"/>
    <property type="project" value="UniProtKB"/>
</dbReference>
<dbReference type="GO" id="GO:0010804">
    <property type="term" value="P:negative regulation of tumor necrosis factor-mediated signaling pathway"/>
    <property type="evidence" value="ECO:0007669"/>
    <property type="project" value="Ensembl"/>
</dbReference>
<dbReference type="GO" id="GO:0035265">
    <property type="term" value="P:organ growth"/>
    <property type="evidence" value="ECO:0000250"/>
    <property type="project" value="UniProtKB"/>
</dbReference>
<dbReference type="GO" id="GO:0034504">
    <property type="term" value="P:protein localization to nucleus"/>
    <property type="evidence" value="ECO:0007669"/>
    <property type="project" value="Ensembl"/>
</dbReference>
<dbReference type="GO" id="GO:0120193">
    <property type="term" value="P:tight junction organization"/>
    <property type="evidence" value="ECO:0000250"/>
    <property type="project" value="UniProtKB"/>
</dbReference>
<dbReference type="Gene3D" id="1.20.140.150">
    <property type="match status" value="1"/>
</dbReference>
<dbReference type="InterPro" id="IPR006187">
    <property type="entry name" value="Claudin"/>
</dbReference>
<dbReference type="InterPro" id="IPR003928">
    <property type="entry name" value="Claudin18"/>
</dbReference>
<dbReference type="InterPro" id="IPR017974">
    <property type="entry name" value="Claudin_CS"/>
</dbReference>
<dbReference type="InterPro" id="IPR004031">
    <property type="entry name" value="PMP22/EMP/MP20/Claudin"/>
</dbReference>
<dbReference type="PANTHER" id="PTHR12002">
    <property type="entry name" value="CLAUDIN"/>
    <property type="match status" value="1"/>
</dbReference>
<dbReference type="Pfam" id="PF00822">
    <property type="entry name" value="PMP22_Claudin"/>
    <property type="match status" value="1"/>
</dbReference>
<dbReference type="PRINTS" id="PR01077">
    <property type="entry name" value="CLAUDIN"/>
</dbReference>
<dbReference type="PRINTS" id="PR01448">
    <property type="entry name" value="CLAUDIN18"/>
</dbReference>
<dbReference type="PROSITE" id="PS01346">
    <property type="entry name" value="CLAUDIN"/>
    <property type="match status" value="1"/>
</dbReference>
<comment type="function">
    <text evidence="2">Involved in alveolar fluid homeostasis via regulation of alveolar epithelial tight junction composition and therefore ion transport and solute permeability, potentially via downstream regulation of the actin cytoskeleton organization and beta-2-adrenergic signaling (By similarity). Required for lung alveolarization and maintenance of the paracellular alveolar epithelial barrier (By similarity). Acts to maintain epithelial progenitor cell proliferation and organ size, via regulation of YAP1 localization away from the nucleus and thereby restriction of YAP1 target gene transcription (By similarity). Acts as a negative regulator of RANKL-induced osteoclast differentiation, potentially via relocation of TJP2/ZO-2 away from the nucleus, subsequently involved in bone resorption in response to calcium deficiency (By similarity). Mediates the osteoprotective effects of estrogen, potentially via acting downstream of estrogen signaling independently of RANKL signaling pathways (By similarity).</text>
</comment>
<comment type="subunit">
    <text evidence="1 2">Interacts with TJP2/ZO-2 (By similarity). Interacts with TJP1/ZO-1 (By similarity). Interacts with YAP1 (phosphorylated); the interaction sequesters YAP1 away from the nucleus and thereby restricts transcription of YAP1 target genes (By similarity). Interacts with CLDN19.</text>
</comment>
<comment type="subcellular location">
    <subcellularLocation>
        <location evidence="2">Cell junction</location>
        <location evidence="2">Tight junction</location>
    </subcellularLocation>
    <subcellularLocation>
        <location evidence="2">Cell membrane</location>
        <topology evidence="3">Multi-pass membrane protein</topology>
    </subcellularLocation>
    <text evidence="2">Localizes to tight junctions in epithelial cells.</text>
</comment>
<comment type="similarity">
    <text evidence="5">Belongs to the claudin family.</text>
</comment>
<gene>
    <name type="primary">CLDN18</name>
</gene>
<protein>
    <recommendedName>
        <fullName>Claudin-18</fullName>
    </recommendedName>
</protein>
<reference key="1">
    <citation type="submission" date="2006-08" db="EMBL/GenBank/DDBJ databases">
        <authorList>
            <consortium name="NIH - Mammalian Gene Collection (MGC) project"/>
        </authorList>
    </citation>
    <scope>NUCLEOTIDE SEQUENCE [LARGE SCALE MRNA]</scope>
    <source>
        <strain>Hereford</strain>
        <tissue>Fetal lung</tissue>
    </source>
</reference>
<keyword id="KW-0965">Cell junction</keyword>
<keyword id="KW-1003">Cell membrane</keyword>
<keyword id="KW-0472">Membrane</keyword>
<keyword id="KW-0597">Phosphoprotein</keyword>
<keyword id="KW-1185">Reference proteome</keyword>
<keyword id="KW-0796">Tight junction</keyword>
<keyword id="KW-0812">Transmembrane</keyword>
<keyword id="KW-1133">Transmembrane helix</keyword>
<organism>
    <name type="scientific">Bos taurus</name>
    <name type="common">Bovine</name>
    <dbReference type="NCBI Taxonomy" id="9913"/>
    <lineage>
        <taxon>Eukaryota</taxon>
        <taxon>Metazoa</taxon>
        <taxon>Chordata</taxon>
        <taxon>Craniata</taxon>
        <taxon>Vertebrata</taxon>
        <taxon>Euteleostomi</taxon>
        <taxon>Mammalia</taxon>
        <taxon>Eutheria</taxon>
        <taxon>Laurasiatheria</taxon>
        <taxon>Artiodactyla</taxon>
        <taxon>Ruminantia</taxon>
        <taxon>Pecora</taxon>
        <taxon>Bovidae</taxon>
        <taxon>Bovinae</taxon>
        <taxon>Bos</taxon>
    </lineage>
</organism>